<protein>
    <recommendedName>
        <fullName evidence="2">15-cis-phytoene synthase</fullName>
        <ecNumber evidence="1">2.5.1.32</ecNumber>
    </recommendedName>
    <alternativeName>
        <fullName>Phytoene synthase</fullName>
        <shortName>PSase</shortName>
    </alternativeName>
</protein>
<organism>
    <name type="scientific">Enterobacter agglomerans</name>
    <name type="common">Erwinia herbicola</name>
    <name type="synonym">Pantoea agglomerans</name>
    <dbReference type="NCBI Taxonomy" id="549"/>
    <lineage>
        <taxon>Bacteria</taxon>
        <taxon>Pseudomonadati</taxon>
        <taxon>Pseudomonadota</taxon>
        <taxon>Gammaproteobacteria</taxon>
        <taxon>Enterobacterales</taxon>
        <taxon>Erwiniaceae</taxon>
        <taxon>Pantoea</taxon>
        <taxon>Pantoea agglomerans group</taxon>
    </lineage>
</organism>
<comment type="function">
    <text evidence="1">Involved in the biosynthesis of carotenoids. Catalyzes stereoselectively the condensation of two molecules of geranylgeranyl diphosphate (GGPP) to give prephytoene diphosphate (PPPP) and the subsequent rearrangement of the cyclopropylcarbinyl intermediate to yield 15-cis-phytoene.</text>
</comment>
<comment type="catalytic activity">
    <reaction evidence="1">
        <text>2 (2E,6E,10E)-geranylgeranyl diphosphate = 15-cis-phytoene + 2 diphosphate</text>
        <dbReference type="Rhea" id="RHEA:34475"/>
        <dbReference type="ChEBI" id="CHEBI:27787"/>
        <dbReference type="ChEBI" id="CHEBI:33019"/>
        <dbReference type="ChEBI" id="CHEBI:58756"/>
        <dbReference type="EC" id="2.5.1.32"/>
    </reaction>
</comment>
<comment type="cofactor">
    <cofactor evidence="1">
        <name>ATP</name>
        <dbReference type="ChEBI" id="CHEBI:30616"/>
    </cofactor>
    <text evidence="1">ATP is required for the transferase activity but it does not seem to be hydrolyzed during the reaction.</text>
</comment>
<comment type="cofactor">
    <cofactor evidence="1">
        <name>Mn(2+)</name>
        <dbReference type="ChEBI" id="CHEBI:29035"/>
    </cofactor>
</comment>
<comment type="activity regulation">
    <text evidence="1">Significant inhibition is seen at GGPP concentrations above 100 uM.</text>
</comment>
<comment type="biophysicochemical properties">
    <phDependence>
        <text evidence="1">Optimum pH is 8.2.</text>
    </phDependence>
</comment>
<comment type="pathway">
    <text>Carotenoid biosynthesis; phytoene biosynthesis.</text>
</comment>
<comment type="similarity">
    <text evidence="2">Belongs to the phytoene/squalene synthase family.</text>
</comment>
<comment type="caution">
    <text evidence="3">The enzyme produces 15-cis-phytoene. The conversion to all-trans-phytoene is due to photoisomerisation.</text>
</comment>
<feature type="chain" id="PRO_0000423168" description="15-cis-phytoene synthase">
    <location>
        <begin position="1"/>
        <end position="295"/>
    </location>
</feature>
<reference key="1">
    <citation type="journal article" date="2010" name="Vestsi Natsyianalnai Akademii Navuk Belarusi Ser. Biyalagichnykh Navuk">
        <title>Sequencing of the bacterial phytoene synthase gene and comparing with psy-gene of plants.</title>
        <authorList>
            <person name="Galinousky D.V."/>
        </authorList>
    </citation>
    <scope>NUCLEOTIDE SEQUENCE [GENOMIC DNA]</scope>
    <source>
        <strain>206</strain>
    </source>
</reference>
<reference key="2">
    <citation type="journal article" date="2003" name="Biochemistry">
        <title>Bacterial phytoene synthase: molecular cloning, expression, and characterization of Erwinia herbicola phytoene synthase.</title>
        <authorList>
            <person name="Iwata-Reuyl D."/>
            <person name="Math S.K."/>
            <person name="Desai S.B."/>
            <person name="Poulter C.D."/>
        </authorList>
    </citation>
    <scope>FUNCTION</scope>
    <scope>CATALYTIC ACTIVITY</scope>
    <scope>BIOPHYSICOCHEMICAL PROPERTIES</scope>
    <scope>COFACTOR</scope>
    <scope>ACTIVITY REGULATION</scope>
</reference>
<proteinExistence type="evidence at protein level"/>
<name>CRTB_ENTAG</name>
<sequence>MEVGSKSFATASKLFDAKTRRSVLMLYAWCRHCDDVIDDQVLGFSNDTPSLQSAEQRLAQLEMKTRQPMRIQMHEPAFAAFQEVAMAHDILPAYAFDHLAGFAMDVHETRYQTLDDTLRYCYHVAGVVGLMMAQIMGVRDNATLDRACDLGLAFQLTNIARDIVEDAEAGRCYLPAAWLAEEGLTRENLADPQNRKALSRVARRLVETAEPYYRSASAGLPGLPLRSAWAIATAQQVYRKIGMKVVQAGSQAWEQRQSTSTPEKLALLVAASGQAVTSRVARHAPRSADLWQRPV</sequence>
<keyword id="KW-0125">Carotenoid biosynthesis</keyword>
<keyword id="KW-0464">Manganese</keyword>
<keyword id="KW-0479">Metal-binding</keyword>
<keyword id="KW-0808">Transferase</keyword>
<gene>
    <name type="primary">crtB</name>
</gene>
<dbReference type="EC" id="2.5.1.32" evidence="1"/>
<dbReference type="EMBL" id="GU721093">
    <property type="protein sequence ID" value="ADD97675.1"/>
    <property type="molecule type" value="Genomic_DNA"/>
</dbReference>
<dbReference type="SMR" id="D5KXJ0"/>
<dbReference type="KEGG" id="ag:ADD97675"/>
<dbReference type="eggNOG" id="COG1562">
    <property type="taxonomic scope" value="Bacteria"/>
</dbReference>
<dbReference type="UniPathway" id="UPA00799"/>
<dbReference type="GO" id="GO:0004311">
    <property type="term" value="F:geranylgeranyl diphosphate synthase activity"/>
    <property type="evidence" value="ECO:0007669"/>
    <property type="project" value="InterPro"/>
</dbReference>
<dbReference type="GO" id="GO:0046872">
    <property type="term" value="F:metal ion binding"/>
    <property type="evidence" value="ECO:0007669"/>
    <property type="project" value="UniProtKB-KW"/>
</dbReference>
<dbReference type="GO" id="GO:0051996">
    <property type="term" value="F:squalene synthase [NAD(P)H] activity"/>
    <property type="evidence" value="ECO:0007669"/>
    <property type="project" value="InterPro"/>
</dbReference>
<dbReference type="GO" id="GO:0016765">
    <property type="term" value="F:transferase activity, transferring alkyl or aryl (other than methyl) groups"/>
    <property type="evidence" value="ECO:0000314"/>
    <property type="project" value="UniProtKB"/>
</dbReference>
<dbReference type="GO" id="GO:0016117">
    <property type="term" value="P:carotenoid biosynthetic process"/>
    <property type="evidence" value="ECO:0000314"/>
    <property type="project" value="UniProtKB"/>
</dbReference>
<dbReference type="CDD" id="cd00683">
    <property type="entry name" value="Trans_IPPS_HH"/>
    <property type="match status" value="1"/>
</dbReference>
<dbReference type="FunFam" id="1.10.600.10:FF:000020">
    <property type="entry name" value="Phytoene synthase"/>
    <property type="match status" value="1"/>
</dbReference>
<dbReference type="Gene3D" id="1.10.600.10">
    <property type="entry name" value="Farnesyl Diphosphate Synthase"/>
    <property type="match status" value="1"/>
</dbReference>
<dbReference type="InterPro" id="IPR008949">
    <property type="entry name" value="Isoprenoid_synthase_dom_sf"/>
</dbReference>
<dbReference type="InterPro" id="IPR053452">
    <property type="entry name" value="Phytoene_synthase-rel"/>
</dbReference>
<dbReference type="InterPro" id="IPR002060">
    <property type="entry name" value="Squ/phyt_synthse"/>
</dbReference>
<dbReference type="InterPro" id="IPR019845">
    <property type="entry name" value="Squalene/phytoene_synthase_CS"/>
</dbReference>
<dbReference type="InterPro" id="IPR044843">
    <property type="entry name" value="Trans_IPPS_bact-type"/>
</dbReference>
<dbReference type="InterPro" id="IPR033904">
    <property type="entry name" value="Trans_IPPS_HH"/>
</dbReference>
<dbReference type="NCBIfam" id="NF042419">
    <property type="entry name" value="Phyto_syn_CrtB"/>
    <property type="match status" value="1"/>
</dbReference>
<dbReference type="PANTHER" id="PTHR31480">
    <property type="entry name" value="BIFUNCTIONAL LYCOPENE CYCLASE/PHYTOENE SYNTHASE"/>
    <property type="match status" value="1"/>
</dbReference>
<dbReference type="Pfam" id="PF00494">
    <property type="entry name" value="SQS_PSY"/>
    <property type="match status" value="1"/>
</dbReference>
<dbReference type="SFLD" id="SFLDG01212">
    <property type="entry name" value="Phytoene_synthase_like"/>
    <property type="match status" value="1"/>
</dbReference>
<dbReference type="SFLD" id="SFLDG01018">
    <property type="entry name" value="Squalene/Phytoene_Synthase_Lik"/>
    <property type="match status" value="1"/>
</dbReference>
<dbReference type="SUPFAM" id="SSF48576">
    <property type="entry name" value="Terpenoid synthases"/>
    <property type="match status" value="1"/>
</dbReference>
<dbReference type="PROSITE" id="PS01044">
    <property type="entry name" value="SQUALEN_PHYTOEN_SYN_1"/>
    <property type="match status" value="1"/>
</dbReference>
<dbReference type="PROSITE" id="PS01045">
    <property type="entry name" value="SQUALEN_PHYTOEN_SYN_2"/>
    <property type="match status" value="1"/>
</dbReference>
<accession>D5KXJ0</accession>
<evidence type="ECO:0000269" key="1">
    <source>
    </source>
</evidence>
<evidence type="ECO:0000305" key="2"/>
<evidence type="ECO:0000305" key="3">
    <source>
    </source>
</evidence>